<protein>
    <recommendedName>
        <fullName>Relaxosome protein TraY</fullName>
    </recommendedName>
</protein>
<proteinExistence type="inferred from homology"/>
<sequence>MSRNIIRPAPGNKVLLVLDDATNHKLLGARERSGRTKTNEVLVRLRDHLNRFPDFYNLDAIKEGAEETDSIIKDL</sequence>
<organism>
    <name type="scientific">Escherichia coli</name>
    <dbReference type="NCBI Taxonomy" id="562"/>
    <lineage>
        <taxon>Bacteria</taxon>
        <taxon>Pseudomonadati</taxon>
        <taxon>Pseudomonadota</taxon>
        <taxon>Gammaproteobacteria</taxon>
        <taxon>Enterobacterales</taxon>
        <taxon>Enterobacteriaceae</taxon>
        <taxon>Escherichia</taxon>
    </lineage>
</organism>
<geneLocation type="plasmid">
    <name>IncFII R100-1</name>
</geneLocation>
<geneLocation type="plasmid">
    <name>IncFII R100</name>
    <name>NR1</name>
</geneLocation>
<accession>P05835</accession>
<dbReference type="EMBL" id="M15136">
    <property type="protein sequence ID" value="AAA26076.1"/>
    <property type="molecule type" value="Genomic_DNA"/>
</dbReference>
<dbReference type="EMBL" id="M20941">
    <property type="protein sequence ID" value="AAA26073.1"/>
    <property type="molecule type" value="Genomic_DNA"/>
</dbReference>
<dbReference type="PIR" id="C25033">
    <property type="entry name" value="BVECRY"/>
</dbReference>
<dbReference type="RefSeq" id="NP_957599.1">
    <property type="nucleotide sequence ID" value="NC_005327.1"/>
</dbReference>
<dbReference type="RefSeq" id="WP_000089263.1">
    <property type="nucleotide sequence ID" value="NZ_WVVN01000094.1"/>
</dbReference>
<dbReference type="RefSeq" id="YP_001096467.1">
    <property type="nucleotide sequence ID" value="NC_009133.1"/>
</dbReference>
<dbReference type="RefSeq" id="YP_003108229.1">
    <property type="nucleotide sequence ID" value="NC_013121.1"/>
</dbReference>
<dbReference type="RefSeq" id="YP_006952237.1">
    <property type="nucleotide sequence ID" value="NC_019057.1"/>
</dbReference>
<dbReference type="RefSeq" id="YP_006953321.1">
    <property type="nucleotide sequence ID" value="NC_019071.1"/>
</dbReference>
<dbReference type="RefSeq" id="YP_006953420.1">
    <property type="nucleotide sequence ID" value="NC_019072.1"/>
</dbReference>
<dbReference type="RefSeq" id="YP_006953947.1">
    <property type="nucleotide sequence ID" value="NC_019090.1"/>
</dbReference>
<dbReference type="RefSeq" id="YP_006954268.1">
    <property type="nucleotide sequence ID" value="NC_019095.1"/>
</dbReference>
<dbReference type="RefSeq" id="YP_006990759.1">
    <property type="nucleotide sequence ID" value="NC_019424.1"/>
</dbReference>
<dbReference type="RefSeq" id="YP_007447545.1">
    <property type="nucleotide sequence ID" value="NC_020278.2"/>
</dbReference>
<dbReference type="RefSeq" id="YP_009070966.1">
    <property type="nucleotide sequence ID" value="NC_025177.1"/>
</dbReference>
<dbReference type="RefSeq" id="YP_788061.1">
    <property type="nucleotide sequence ID" value="NC_008460.1"/>
</dbReference>
<dbReference type="SMR" id="P05835"/>
<dbReference type="GO" id="GO:0005737">
    <property type="term" value="C:cytoplasm"/>
    <property type="evidence" value="ECO:0007669"/>
    <property type="project" value="UniProtKB-SubCell"/>
</dbReference>
<dbReference type="GO" id="GO:0003677">
    <property type="term" value="F:DNA binding"/>
    <property type="evidence" value="ECO:0007669"/>
    <property type="project" value="UniProtKB-KW"/>
</dbReference>
<dbReference type="InterPro" id="IPR008876">
    <property type="entry name" value="TraY"/>
</dbReference>
<dbReference type="NCBIfam" id="NF010300">
    <property type="entry name" value="PRK13740.1-1"/>
    <property type="match status" value="1"/>
</dbReference>
<dbReference type="Pfam" id="PF05509">
    <property type="entry name" value="TraY"/>
    <property type="match status" value="1"/>
</dbReference>
<keyword id="KW-0010">Activator</keyword>
<keyword id="KW-0184">Conjugation</keyword>
<keyword id="KW-0963">Cytoplasm</keyword>
<keyword id="KW-0238">DNA-binding</keyword>
<keyword id="KW-0614">Plasmid</keyword>
<keyword id="KW-0804">Transcription</keyword>
<keyword id="KW-0805">Transcription regulation</keyword>
<comment type="function">
    <text evidence="1">Conjugative DNA transfer (CDT) is the unidirectional transfer of ssDNA plasmid from a donor to a recipient cell. It is the central mechanism by which antibiotic resistance and virulence factors are propagated in bacterial populations. Part of the relaxosome, which facilitates a site- and strand-specific cut in the origin of transfer by TraI, at the nic site. Relaxosome formation requires binding of IHF and TraY to the oriT region, which then facilitates binding of TraI. Also positively regulates tra gene expression (By similarity).</text>
</comment>
<comment type="subunit">
    <text evidence="1">Part of the relaxosome, a complex composed of plasmid encoded TraI, TraM, TraY and host-encoded IHF bound to the F plasmid origin of transfer (oriT). Interacts with TraM, probably through its C-terminus (By similarity).</text>
</comment>
<comment type="subcellular location">
    <subcellularLocation>
        <location evidence="1">Cytoplasm</location>
    </subcellularLocation>
</comment>
<comment type="similarity">
    <text evidence="2">Belongs to the TraY family.</text>
</comment>
<gene>
    <name type="primary">traY</name>
</gene>
<reference key="1">
    <citation type="journal article" date="1986" name="J. Bacteriol.">
        <title>Origin of transfer of IncF plasmids and nucleotide sequences of the type II oriT, traM, and traY alleles from ColB4-K98 and the type IV traY allele from R100-1.</title>
        <authorList>
            <person name="Finlay B.B."/>
            <person name="Frost L.S."/>
            <person name="Paranchych W."/>
        </authorList>
    </citation>
    <scope>NUCLEOTIDE SEQUENCE [GENOMIC DNA]</scope>
    <source>
        <plasmid>IncFII R100-1</plasmid>
    </source>
</reference>
<reference key="2">
    <citation type="journal article" date="1988" name="J. Bacteriol.">
        <title>Identification and characterization of the products from the traJ and traY genes of plasmid R100.</title>
        <authorList>
            <person name="Inamoto S."/>
            <person name="Yoshioka Y."/>
            <person name="Ohtsubo E."/>
        </authorList>
    </citation>
    <scope>NUCLEOTIDE SEQUENCE [GENOMIC DNA]</scope>
    <source>
        <plasmid>IncFII R100 (NR1)</plasmid>
    </source>
</reference>
<evidence type="ECO:0000250" key="1"/>
<evidence type="ECO:0000305" key="2"/>
<name>TRAY3_ECOLX</name>
<feature type="chain" id="PRO_0000068482" description="Relaxosome protein TraY">
    <location>
        <begin position="1"/>
        <end position="75"/>
    </location>
</feature>